<feature type="chain" id="PRO_0000059601" description="DNA ligase">
    <location>
        <begin position="1"/>
        <end position="555"/>
    </location>
</feature>
<feature type="active site" description="N6-AMP-lysine intermediate" evidence="1">
    <location>
        <position position="249"/>
    </location>
</feature>
<feature type="binding site" evidence="1">
    <location>
        <position position="247"/>
    </location>
    <ligand>
        <name>ATP</name>
        <dbReference type="ChEBI" id="CHEBI:30616"/>
    </ligand>
</feature>
<feature type="binding site" evidence="1">
    <location>
        <position position="254"/>
    </location>
    <ligand>
        <name>ATP</name>
        <dbReference type="ChEBI" id="CHEBI:30616"/>
    </ligand>
</feature>
<feature type="binding site" evidence="1">
    <location>
        <position position="269"/>
    </location>
    <ligand>
        <name>ATP</name>
        <dbReference type="ChEBI" id="CHEBI:30616"/>
    </ligand>
</feature>
<feature type="binding site" evidence="1">
    <location>
        <position position="298"/>
    </location>
    <ligand>
        <name>ATP</name>
        <dbReference type="ChEBI" id="CHEBI:30616"/>
    </ligand>
</feature>
<feature type="binding site" evidence="1">
    <location>
        <position position="337"/>
    </location>
    <ligand>
        <name>ATP</name>
        <dbReference type="ChEBI" id="CHEBI:30616"/>
    </ligand>
</feature>
<feature type="binding site" evidence="1">
    <location>
        <position position="411"/>
    </location>
    <ligand>
        <name>ATP</name>
        <dbReference type="ChEBI" id="CHEBI:30616"/>
    </ligand>
</feature>
<feature type="binding site" evidence="1">
    <location>
        <position position="417"/>
    </location>
    <ligand>
        <name>ATP</name>
        <dbReference type="ChEBI" id="CHEBI:30616"/>
    </ligand>
</feature>
<feature type="helix" evidence="3">
    <location>
        <begin position="3"/>
        <end position="13"/>
    </location>
</feature>
<feature type="helix" evidence="3">
    <location>
        <begin position="19"/>
        <end position="31"/>
    </location>
</feature>
<feature type="helix" evidence="3">
    <location>
        <begin position="36"/>
        <end position="46"/>
    </location>
</feature>
<feature type="helix" evidence="3">
    <location>
        <begin position="63"/>
        <end position="74"/>
    </location>
</feature>
<feature type="helix" evidence="3">
    <location>
        <begin position="78"/>
        <end position="88"/>
    </location>
</feature>
<feature type="helix" evidence="3">
    <location>
        <begin position="91"/>
        <end position="105"/>
    </location>
</feature>
<feature type="helix" evidence="3">
    <location>
        <begin position="114"/>
        <end position="126"/>
    </location>
</feature>
<feature type="helix" evidence="3">
    <location>
        <begin position="132"/>
        <end position="146"/>
    </location>
</feature>
<feature type="helix" evidence="3">
    <location>
        <begin position="149"/>
        <end position="159"/>
    </location>
</feature>
<feature type="helix" evidence="3">
    <location>
        <begin position="169"/>
        <end position="179"/>
    </location>
</feature>
<feature type="helix" evidence="3">
    <location>
        <begin position="184"/>
        <end position="194"/>
    </location>
</feature>
<feature type="helix" evidence="3">
    <location>
        <begin position="197"/>
        <end position="213"/>
    </location>
</feature>
<feature type="strand" evidence="3">
    <location>
        <begin position="227"/>
        <end position="230"/>
    </location>
</feature>
<feature type="helix" evidence="3">
    <location>
        <begin position="234"/>
        <end position="240"/>
    </location>
</feature>
<feature type="strand" evidence="3">
    <location>
        <begin position="241"/>
        <end position="249"/>
    </location>
</feature>
<feature type="strand" evidence="3">
    <location>
        <begin position="251"/>
        <end position="259"/>
    </location>
</feature>
<feature type="strand" evidence="3">
    <location>
        <begin position="265"/>
        <end position="268"/>
    </location>
</feature>
<feature type="helix" evidence="3">
    <location>
        <begin position="275"/>
        <end position="277"/>
    </location>
</feature>
<feature type="helix" evidence="3">
    <location>
        <begin position="279"/>
        <end position="288"/>
    </location>
</feature>
<feature type="strand" evidence="3">
    <location>
        <begin position="291"/>
        <end position="303"/>
    </location>
</feature>
<feature type="strand" evidence="3">
    <location>
        <begin position="306"/>
        <end position="308"/>
    </location>
</feature>
<feature type="helix" evidence="3">
    <location>
        <begin position="310"/>
        <end position="318"/>
    </location>
</feature>
<feature type="helix" evidence="3">
    <location>
        <begin position="324"/>
        <end position="329"/>
    </location>
</feature>
<feature type="strand" evidence="3">
    <location>
        <begin position="332"/>
        <end position="345"/>
    </location>
</feature>
<feature type="helix" evidence="3">
    <location>
        <begin position="351"/>
        <end position="361"/>
    </location>
</feature>
<feature type="strand" evidence="3">
    <location>
        <begin position="366"/>
        <end position="370"/>
    </location>
</feature>
<feature type="strand" evidence="3">
    <location>
        <begin position="373"/>
        <end position="377"/>
    </location>
</feature>
<feature type="helix" evidence="3">
    <location>
        <begin position="379"/>
        <end position="391"/>
    </location>
</feature>
<feature type="strand" evidence="3">
    <location>
        <begin position="396"/>
        <end position="400"/>
    </location>
</feature>
<feature type="strand" evidence="3">
    <location>
        <begin position="411"/>
        <end position="421"/>
    </location>
</feature>
<feature type="strand" evidence="3">
    <location>
        <begin position="425"/>
        <end position="434"/>
    </location>
</feature>
<feature type="helix" evidence="3">
    <location>
        <begin position="439"/>
        <end position="441"/>
    </location>
</feature>
<feature type="strand" evidence="3">
    <location>
        <begin position="442"/>
        <end position="451"/>
    </location>
</feature>
<feature type="turn" evidence="3">
    <location>
        <begin position="453"/>
        <end position="455"/>
    </location>
</feature>
<feature type="strand" evidence="3">
    <location>
        <begin position="458"/>
        <end position="464"/>
    </location>
</feature>
<feature type="helix" evidence="3">
    <location>
        <begin position="470"/>
        <end position="480"/>
    </location>
</feature>
<feature type="helix" evidence="3">
    <location>
        <begin position="481"/>
        <end position="483"/>
    </location>
</feature>
<feature type="strand" evidence="3">
    <location>
        <begin position="484"/>
        <end position="488"/>
    </location>
</feature>
<feature type="strand" evidence="3">
    <location>
        <begin position="491"/>
        <end position="494"/>
    </location>
</feature>
<feature type="strand" evidence="3">
    <location>
        <begin position="499"/>
        <end position="503"/>
    </location>
</feature>
<feature type="strand" evidence="3">
    <location>
        <begin position="505"/>
        <end position="509"/>
    </location>
</feature>
<feature type="strand" evidence="3">
    <location>
        <begin position="511"/>
        <end position="513"/>
    </location>
</feature>
<feature type="strand" evidence="3">
    <location>
        <begin position="516"/>
        <end position="521"/>
    </location>
</feature>
<feature type="strand" evidence="3">
    <location>
        <begin position="523"/>
        <end position="527"/>
    </location>
</feature>
<feature type="helix" evidence="3">
    <location>
        <begin position="533"/>
        <end position="535"/>
    </location>
</feature>
<feature type="helix" evidence="3">
    <location>
        <begin position="539"/>
        <end position="547"/>
    </location>
</feature>
<reference key="1">
    <citation type="journal article" date="1997" name="Nature">
        <title>The complete genome sequence of the hyperthermophilic, sulphate-reducing archaeon Archaeoglobus fulgidus.</title>
        <authorList>
            <person name="Klenk H.-P."/>
            <person name="Clayton R.A."/>
            <person name="Tomb J.-F."/>
            <person name="White O."/>
            <person name="Nelson K.E."/>
            <person name="Ketchum K.A."/>
            <person name="Dodson R.J."/>
            <person name="Gwinn M.L."/>
            <person name="Hickey E.K."/>
            <person name="Peterson J.D."/>
            <person name="Richardson D.L."/>
            <person name="Kerlavage A.R."/>
            <person name="Graham D.E."/>
            <person name="Kyrpides N.C."/>
            <person name="Fleischmann R.D."/>
            <person name="Quackenbush J."/>
            <person name="Lee N.H."/>
            <person name="Sutton G.G."/>
            <person name="Gill S.R."/>
            <person name="Kirkness E.F."/>
            <person name="Dougherty B.A."/>
            <person name="McKenney K."/>
            <person name="Adams M.D."/>
            <person name="Loftus B.J."/>
            <person name="Peterson S.N."/>
            <person name="Reich C.I."/>
            <person name="McNeil L.K."/>
            <person name="Badger J.H."/>
            <person name="Glodek A."/>
            <person name="Zhou L."/>
            <person name="Overbeek R."/>
            <person name="Gocayne J.D."/>
            <person name="Weidman J.F."/>
            <person name="McDonald L.A."/>
            <person name="Utterback T.R."/>
            <person name="Cotton M.D."/>
            <person name="Spriggs T."/>
            <person name="Artiach P."/>
            <person name="Kaine B.P."/>
            <person name="Sykes S.M."/>
            <person name="Sadow P.W."/>
            <person name="D'Andrea K.P."/>
            <person name="Bowman C."/>
            <person name="Fujii C."/>
            <person name="Garland S.A."/>
            <person name="Mason T.M."/>
            <person name="Olsen G.J."/>
            <person name="Fraser C.M."/>
            <person name="Smith H.O."/>
            <person name="Woese C.R."/>
            <person name="Venter J.C."/>
        </authorList>
    </citation>
    <scope>NUCLEOTIDE SEQUENCE [LARGE SCALE GENOMIC DNA]</scope>
    <source>
        <strain>ATCC 49558 / DSM 4304 / JCM 9628 / NBRC 100126 / VC-16</strain>
    </source>
</reference>
<keyword id="KW-0002">3D-structure</keyword>
<keyword id="KW-0067">ATP-binding</keyword>
<keyword id="KW-0131">Cell cycle</keyword>
<keyword id="KW-0132">Cell division</keyword>
<keyword id="KW-0227">DNA damage</keyword>
<keyword id="KW-0233">DNA recombination</keyword>
<keyword id="KW-0234">DNA repair</keyword>
<keyword id="KW-0235">DNA replication</keyword>
<keyword id="KW-0436">Ligase</keyword>
<keyword id="KW-0460">Magnesium</keyword>
<keyword id="KW-0479">Metal-binding</keyword>
<keyword id="KW-0547">Nucleotide-binding</keyword>
<keyword id="KW-1185">Reference proteome</keyword>
<proteinExistence type="evidence at protein level"/>
<dbReference type="EC" id="6.5.1.1" evidence="1"/>
<dbReference type="EMBL" id="AE000782">
    <property type="protein sequence ID" value="AAB90616.1"/>
    <property type="status" value="ALT_INIT"/>
    <property type="molecule type" value="Genomic_DNA"/>
</dbReference>
<dbReference type="PIR" id="G69327">
    <property type="entry name" value="G69327"/>
</dbReference>
<dbReference type="RefSeq" id="WP_048064635.1">
    <property type="nucleotide sequence ID" value="NC_000917.1"/>
</dbReference>
<dbReference type="PDB" id="3GDE">
    <property type="method" value="X-ray"/>
    <property type="resolution" value="2.30 A"/>
    <property type="chains" value="A=1-555"/>
</dbReference>
<dbReference type="PDBsum" id="3GDE"/>
<dbReference type="SMR" id="O29632"/>
<dbReference type="STRING" id="224325.AF_0623"/>
<dbReference type="PaxDb" id="224325-AF_0623"/>
<dbReference type="EnsemblBacteria" id="AAB90616">
    <property type="protein sequence ID" value="AAB90616"/>
    <property type="gene ID" value="AF_0623"/>
</dbReference>
<dbReference type="KEGG" id="afu:AF_0623"/>
<dbReference type="eggNOG" id="arCOG01347">
    <property type="taxonomic scope" value="Archaea"/>
</dbReference>
<dbReference type="HOGENOM" id="CLU_005138_6_0_2"/>
<dbReference type="OrthoDB" id="31274at2157"/>
<dbReference type="PhylomeDB" id="O29632"/>
<dbReference type="BRENDA" id="6.5.1.1">
    <property type="organism ID" value="414"/>
</dbReference>
<dbReference type="EvolutionaryTrace" id="O29632"/>
<dbReference type="Proteomes" id="UP000002199">
    <property type="component" value="Chromosome"/>
</dbReference>
<dbReference type="GO" id="GO:0005524">
    <property type="term" value="F:ATP binding"/>
    <property type="evidence" value="ECO:0007669"/>
    <property type="project" value="UniProtKB-UniRule"/>
</dbReference>
<dbReference type="GO" id="GO:0003677">
    <property type="term" value="F:DNA binding"/>
    <property type="evidence" value="ECO:0007669"/>
    <property type="project" value="InterPro"/>
</dbReference>
<dbReference type="GO" id="GO:0003910">
    <property type="term" value="F:DNA ligase (ATP) activity"/>
    <property type="evidence" value="ECO:0007669"/>
    <property type="project" value="UniProtKB-UniRule"/>
</dbReference>
<dbReference type="GO" id="GO:0046872">
    <property type="term" value="F:metal ion binding"/>
    <property type="evidence" value="ECO:0007669"/>
    <property type="project" value="UniProtKB-KW"/>
</dbReference>
<dbReference type="GO" id="GO:0051301">
    <property type="term" value="P:cell division"/>
    <property type="evidence" value="ECO:0007669"/>
    <property type="project" value="UniProtKB-KW"/>
</dbReference>
<dbReference type="GO" id="GO:0071897">
    <property type="term" value="P:DNA biosynthetic process"/>
    <property type="evidence" value="ECO:0007669"/>
    <property type="project" value="InterPro"/>
</dbReference>
<dbReference type="GO" id="GO:0006310">
    <property type="term" value="P:DNA recombination"/>
    <property type="evidence" value="ECO:0007669"/>
    <property type="project" value="UniProtKB-UniRule"/>
</dbReference>
<dbReference type="GO" id="GO:0006281">
    <property type="term" value="P:DNA repair"/>
    <property type="evidence" value="ECO:0007669"/>
    <property type="project" value="UniProtKB-UniRule"/>
</dbReference>
<dbReference type="GO" id="GO:0006273">
    <property type="term" value="P:lagging strand elongation"/>
    <property type="evidence" value="ECO:0007669"/>
    <property type="project" value="TreeGrafter"/>
</dbReference>
<dbReference type="CDD" id="cd07901">
    <property type="entry name" value="Adenylation_DNA_ligase_Arch_LigB"/>
    <property type="match status" value="1"/>
</dbReference>
<dbReference type="CDD" id="cd07972">
    <property type="entry name" value="OBF_DNA_ligase_Arch_LigB"/>
    <property type="match status" value="1"/>
</dbReference>
<dbReference type="FunFam" id="1.10.3260.10:FF:000007">
    <property type="entry name" value="DNA ligase"/>
    <property type="match status" value="1"/>
</dbReference>
<dbReference type="FunFam" id="2.40.50.140:FF:000163">
    <property type="entry name" value="Probable DNA ligase"/>
    <property type="match status" value="1"/>
</dbReference>
<dbReference type="FunFam" id="3.30.470.30:FF:000012">
    <property type="entry name" value="Probable DNA ligase"/>
    <property type="match status" value="1"/>
</dbReference>
<dbReference type="Gene3D" id="1.10.3260.10">
    <property type="entry name" value="DNA ligase, ATP-dependent, N-terminal domain"/>
    <property type="match status" value="1"/>
</dbReference>
<dbReference type="Gene3D" id="3.30.470.30">
    <property type="entry name" value="DNA ligase/mRNA capping enzyme"/>
    <property type="match status" value="1"/>
</dbReference>
<dbReference type="Gene3D" id="2.40.50.140">
    <property type="entry name" value="Nucleic acid-binding proteins"/>
    <property type="match status" value="1"/>
</dbReference>
<dbReference type="HAMAP" id="MF_00407">
    <property type="entry name" value="DNA_ligase"/>
    <property type="match status" value="1"/>
</dbReference>
<dbReference type="InterPro" id="IPR050191">
    <property type="entry name" value="ATP-dep_DNA_ligase"/>
</dbReference>
<dbReference type="InterPro" id="IPR022865">
    <property type="entry name" value="DNA_ligae_ATP-dep_bac/arc"/>
</dbReference>
<dbReference type="InterPro" id="IPR000977">
    <property type="entry name" value="DNA_ligase_ATP-dep"/>
</dbReference>
<dbReference type="InterPro" id="IPR012309">
    <property type="entry name" value="DNA_ligase_ATP-dep_C"/>
</dbReference>
<dbReference type="InterPro" id="IPR012310">
    <property type="entry name" value="DNA_ligase_ATP-dep_cent"/>
</dbReference>
<dbReference type="InterPro" id="IPR016059">
    <property type="entry name" value="DNA_ligase_ATP-dep_CS"/>
</dbReference>
<dbReference type="InterPro" id="IPR012308">
    <property type="entry name" value="DNA_ligase_ATP-dep_N"/>
</dbReference>
<dbReference type="InterPro" id="IPR036599">
    <property type="entry name" value="DNA_ligase_N_sf"/>
</dbReference>
<dbReference type="InterPro" id="IPR012340">
    <property type="entry name" value="NA-bd_OB-fold"/>
</dbReference>
<dbReference type="NCBIfam" id="TIGR00574">
    <property type="entry name" value="dnl1"/>
    <property type="match status" value="1"/>
</dbReference>
<dbReference type="PANTHER" id="PTHR45674:SF7">
    <property type="entry name" value="DNA LIGASE"/>
    <property type="match status" value="1"/>
</dbReference>
<dbReference type="PANTHER" id="PTHR45674">
    <property type="entry name" value="DNA LIGASE 1/3 FAMILY MEMBER"/>
    <property type="match status" value="1"/>
</dbReference>
<dbReference type="Pfam" id="PF04679">
    <property type="entry name" value="DNA_ligase_A_C"/>
    <property type="match status" value="1"/>
</dbReference>
<dbReference type="Pfam" id="PF01068">
    <property type="entry name" value="DNA_ligase_A_M"/>
    <property type="match status" value="1"/>
</dbReference>
<dbReference type="Pfam" id="PF04675">
    <property type="entry name" value="DNA_ligase_A_N"/>
    <property type="match status" value="1"/>
</dbReference>
<dbReference type="SUPFAM" id="SSF117018">
    <property type="entry name" value="ATP-dependent DNA ligase DNA-binding domain"/>
    <property type="match status" value="1"/>
</dbReference>
<dbReference type="SUPFAM" id="SSF56091">
    <property type="entry name" value="DNA ligase/mRNA capping enzyme, catalytic domain"/>
    <property type="match status" value="1"/>
</dbReference>
<dbReference type="SUPFAM" id="SSF50249">
    <property type="entry name" value="Nucleic acid-binding proteins"/>
    <property type="match status" value="1"/>
</dbReference>
<dbReference type="PROSITE" id="PS00697">
    <property type="entry name" value="DNA_LIGASE_A1"/>
    <property type="match status" value="1"/>
</dbReference>
<dbReference type="PROSITE" id="PS00333">
    <property type="entry name" value="DNA_LIGASE_A2"/>
    <property type="match status" value="1"/>
</dbReference>
<dbReference type="PROSITE" id="PS50160">
    <property type="entry name" value="DNA_LIGASE_A3"/>
    <property type="match status" value="1"/>
</dbReference>
<gene>
    <name evidence="1" type="primary">lig</name>
    <name type="ordered locus">AF_0623</name>
</gene>
<protein>
    <recommendedName>
        <fullName evidence="1">DNA ligase</fullName>
        <ecNumber evidence="1">6.5.1.1</ecNumber>
    </recommendedName>
    <alternativeName>
        <fullName evidence="1">Polydeoxyribonucleotide synthase [ATP]</fullName>
    </alternativeName>
</protein>
<sequence>MLFAEFAEFCERLEKISSTLELTARIAAFLQKIEDERDLYDVVLFITGKVYPPWDERELGVGIGLLYEALENVSGVKRSEIESMIREYGDLGLVAEQLIKKKKMTTLAFEELTVRKVRETFDEIASLTGEGSMKRKIMLLTGLYGLATPLEARYLTRLILNEMRLGVGEGIMRDAIARAFRADPETVERAYMITNDLGRVAVVAKKEGEEGLRKMKIEIHIPVRMMLAQVAESLESAVREMRTAAVEWKFDGSRVQVHWDGSRVTIYSRRLENVTNALPDIVEEIKKSVKPGVILDGEVIAVKEGKPMPFQHVLRRFRRKHDVAKMVEKIPLEAHFFDILYHDGECIDLPLRERRKLLESAVNESEKIKLAKQIVTDSVDEVRKMYDEAISAGHEGVMIKLPSSPYIPGKRGKNWLKVKAIMETLDLVVVGGEWGEGKRSHWLSSFELACLDPVTGKLLKVGRVATGFTEEDLEELTEMFRPLIVSQQGKKVEFIPKYVFEVAYQEIQKSPKYESGYALRFPRFVRLRDDKDVDEADTIERVENLYKLQFEVKRQ</sequence>
<accession>O29632</accession>
<name>DNLI_ARCFU</name>
<organism>
    <name type="scientific">Archaeoglobus fulgidus (strain ATCC 49558 / DSM 4304 / JCM 9628 / NBRC 100126 / VC-16)</name>
    <dbReference type="NCBI Taxonomy" id="224325"/>
    <lineage>
        <taxon>Archaea</taxon>
        <taxon>Methanobacteriati</taxon>
        <taxon>Methanobacteriota</taxon>
        <taxon>Archaeoglobi</taxon>
        <taxon>Archaeoglobales</taxon>
        <taxon>Archaeoglobaceae</taxon>
        <taxon>Archaeoglobus</taxon>
    </lineage>
</organism>
<comment type="function">
    <text evidence="1">DNA ligase that seals nicks in double-stranded DNA during DNA replication, DNA recombination and DNA repair.</text>
</comment>
<comment type="catalytic activity">
    <reaction evidence="1">
        <text>ATP + (deoxyribonucleotide)n-3'-hydroxyl + 5'-phospho-(deoxyribonucleotide)m = (deoxyribonucleotide)n+m + AMP + diphosphate.</text>
        <dbReference type="EC" id="6.5.1.1"/>
    </reaction>
</comment>
<comment type="cofactor">
    <cofactor evidence="1">
        <name>Mg(2+)</name>
        <dbReference type="ChEBI" id="CHEBI:18420"/>
    </cofactor>
</comment>
<comment type="similarity">
    <text evidence="1">Belongs to the ATP-dependent DNA ligase family.</text>
</comment>
<comment type="sequence caution" evidence="2">
    <conflict type="erroneous initiation">
        <sequence resource="EMBL-CDS" id="AAB90616"/>
    </conflict>
</comment>
<evidence type="ECO:0000255" key="1">
    <source>
        <dbReference type="HAMAP-Rule" id="MF_00407"/>
    </source>
</evidence>
<evidence type="ECO:0000305" key="2"/>
<evidence type="ECO:0007829" key="3">
    <source>
        <dbReference type="PDB" id="3GDE"/>
    </source>
</evidence>